<proteinExistence type="inferred from homology"/>
<protein>
    <recommendedName>
        <fullName evidence="1">Bifunctional enzyme IspD/IspF</fullName>
    </recommendedName>
    <domain>
        <recommendedName>
            <fullName evidence="1">2-C-methyl-D-erythritol 4-phosphate cytidylyltransferase</fullName>
            <ecNumber evidence="1">2.7.7.60</ecNumber>
        </recommendedName>
        <alternativeName>
            <fullName evidence="1">4-diphosphocytidyl-2C-methyl-D-erythritol synthase</fullName>
        </alternativeName>
        <alternativeName>
            <fullName evidence="1">MEP cytidylyltransferase</fullName>
            <shortName evidence="1">MCT</shortName>
        </alternativeName>
    </domain>
    <domain>
        <recommendedName>
            <fullName evidence="1">2-C-methyl-D-erythritol 2,4-cyclodiphosphate synthase</fullName>
            <shortName evidence="1">MECDP-synthase</shortName>
            <shortName evidence="1">MECPP-synthase</shortName>
            <shortName evidence="1">MECPS</shortName>
            <ecNumber evidence="1">4.6.1.12</ecNumber>
        </recommendedName>
    </domain>
</protein>
<gene>
    <name evidence="1" type="primary">ispDF</name>
    <name type="ordered locus">Mmar10_1439</name>
</gene>
<evidence type="ECO:0000255" key="1">
    <source>
        <dbReference type="HAMAP-Rule" id="MF_01520"/>
    </source>
</evidence>
<accession>Q0APQ6</accession>
<keyword id="KW-0414">Isoprene biosynthesis</keyword>
<keyword id="KW-0456">Lyase</keyword>
<keyword id="KW-0479">Metal-binding</keyword>
<keyword id="KW-0511">Multifunctional enzyme</keyword>
<keyword id="KW-0548">Nucleotidyltransferase</keyword>
<keyword id="KW-1185">Reference proteome</keyword>
<keyword id="KW-0808">Transferase</keyword>
<name>ISPDF_MARMM</name>
<reference key="1">
    <citation type="submission" date="2006-08" db="EMBL/GenBank/DDBJ databases">
        <title>Complete sequence of Maricaulis maris MCS10.</title>
        <authorList>
            <consortium name="US DOE Joint Genome Institute"/>
            <person name="Copeland A."/>
            <person name="Lucas S."/>
            <person name="Lapidus A."/>
            <person name="Barry K."/>
            <person name="Detter J.C."/>
            <person name="Glavina del Rio T."/>
            <person name="Hammon N."/>
            <person name="Israni S."/>
            <person name="Dalin E."/>
            <person name="Tice H."/>
            <person name="Pitluck S."/>
            <person name="Saunders E."/>
            <person name="Brettin T."/>
            <person name="Bruce D."/>
            <person name="Han C."/>
            <person name="Tapia R."/>
            <person name="Gilna P."/>
            <person name="Schmutz J."/>
            <person name="Larimer F."/>
            <person name="Land M."/>
            <person name="Hauser L."/>
            <person name="Kyrpides N."/>
            <person name="Mikhailova N."/>
            <person name="Viollier P."/>
            <person name="Stephens C."/>
            <person name="Richardson P."/>
        </authorList>
    </citation>
    <scope>NUCLEOTIDE SEQUENCE [LARGE SCALE GENOMIC DNA]</scope>
    <source>
        <strain>MCS10</strain>
    </source>
</reference>
<sequence>MKIAAVIVAAGRGERAGGGVPKQYRRLGGFFVLTHTLLRLLHREVFDSIIVVVNPADADHIAAVEAELDIKLDTVPGGATRTASVRAGLERARDLGLDAVMIHDAARPFLGDALIDRLVKALADHPAVIPALPVADALFRGGDARMGDPVSRDGLYAAQTPQAFHLAPLLKAYARLGDTALPDDAAVIRAAGGEVALVPGEAENFKLTTRADFERAERQIMSETITVTGQGYDVHRLEPADVMWLCGVEIRAGLGLIGHSDADAGLHALTDAVLGAAGAGDIGQHFPPSDPQWKGAASDAFLLHAIKLLKQVGGELVHADITLIAERPKIGPHRDAMRARVAELTGLPEKRVNIAATTTEKLGFTGRGEGLAAQAIVTARLTT</sequence>
<comment type="function">
    <text evidence="1">Bifunctional enzyme that catalyzes the formation of 4-diphosphocytidyl-2-C-methyl-D-erythritol from CTP and 2-C-methyl-D-erythritol 4-phosphate (MEP) (IspD), and catalyzes the conversion of 4-diphosphocytidyl-2-C-methyl-D-erythritol 2-phosphate (CDP-ME2P) to 2-C-methyl-D-erythritol 2,4-cyclodiphosphate (ME-CPP) with a corresponding release of cytidine 5-monophosphate (CMP) (IspF).</text>
</comment>
<comment type="catalytic activity">
    <reaction evidence="1">
        <text>2-C-methyl-D-erythritol 4-phosphate + CTP + H(+) = 4-CDP-2-C-methyl-D-erythritol + diphosphate</text>
        <dbReference type="Rhea" id="RHEA:13429"/>
        <dbReference type="ChEBI" id="CHEBI:15378"/>
        <dbReference type="ChEBI" id="CHEBI:33019"/>
        <dbReference type="ChEBI" id="CHEBI:37563"/>
        <dbReference type="ChEBI" id="CHEBI:57823"/>
        <dbReference type="ChEBI" id="CHEBI:58262"/>
        <dbReference type="EC" id="2.7.7.60"/>
    </reaction>
</comment>
<comment type="catalytic activity">
    <reaction evidence="1">
        <text>4-CDP-2-C-methyl-D-erythritol 2-phosphate = 2-C-methyl-D-erythritol 2,4-cyclic diphosphate + CMP</text>
        <dbReference type="Rhea" id="RHEA:23864"/>
        <dbReference type="ChEBI" id="CHEBI:57919"/>
        <dbReference type="ChEBI" id="CHEBI:58483"/>
        <dbReference type="ChEBI" id="CHEBI:60377"/>
        <dbReference type="EC" id="4.6.1.12"/>
    </reaction>
</comment>
<comment type="cofactor">
    <cofactor evidence="1">
        <name>a divalent metal cation</name>
        <dbReference type="ChEBI" id="CHEBI:60240"/>
    </cofactor>
</comment>
<comment type="pathway">
    <text evidence="1">Isoprenoid biosynthesis; isopentenyl diphosphate biosynthesis via DXP pathway; isopentenyl diphosphate from 1-deoxy-D-xylulose 5-phosphate: step 2/6.</text>
</comment>
<comment type="pathway">
    <text evidence="1">Isoprenoid biosynthesis; isopentenyl diphosphate biosynthesis via DXP pathway; isopentenyl diphosphate from 1-deoxy-D-xylulose 5-phosphate: step 4/6.</text>
</comment>
<comment type="similarity">
    <text evidence="1">In the N-terminal section; belongs to the IspD/TarI cytidylyltransferase family. IspD subfamily.</text>
</comment>
<comment type="similarity">
    <text evidence="1">In the C-terminal section; belongs to the IspF family.</text>
</comment>
<feature type="chain" id="PRO_0000296749" description="Bifunctional enzyme IspD/IspF">
    <location>
        <begin position="1"/>
        <end position="383"/>
    </location>
</feature>
<feature type="region of interest" description="2-C-methyl-D-erythritol 4-phosphate cytidylyltransferase" evidence="1">
    <location>
        <begin position="1"/>
        <end position="226"/>
    </location>
</feature>
<feature type="region of interest" description="2-C-methyl-D-erythritol 2,4-cyclodiphosphate synthase" evidence="1">
    <location>
        <begin position="227"/>
        <end position="383"/>
    </location>
</feature>
<feature type="binding site" evidence="1">
    <location>
        <begin position="233"/>
        <end position="235"/>
    </location>
    <ligand>
        <name>4-CDP-2-C-methyl-D-erythritol 2-phosphate</name>
        <dbReference type="ChEBI" id="CHEBI:57919"/>
    </ligand>
</feature>
<feature type="binding site" evidence="1">
    <location>
        <position position="233"/>
    </location>
    <ligand>
        <name>a divalent metal cation</name>
        <dbReference type="ChEBI" id="CHEBI:60240"/>
    </ligand>
</feature>
<feature type="binding site" evidence="1">
    <location>
        <position position="235"/>
    </location>
    <ligand>
        <name>a divalent metal cation</name>
        <dbReference type="ChEBI" id="CHEBI:60240"/>
    </ligand>
</feature>
<feature type="binding site" evidence="1">
    <location>
        <begin position="259"/>
        <end position="260"/>
    </location>
    <ligand>
        <name>4-CDP-2-C-methyl-D-erythritol 2-phosphate</name>
        <dbReference type="ChEBI" id="CHEBI:57919"/>
    </ligand>
</feature>
<feature type="binding site" evidence="1">
    <location>
        <position position="267"/>
    </location>
    <ligand>
        <name>a divalent metal cation</name>
        <dbReference type="ChEBI" id="CHEBI:60240"/>
    </ligand>
</feature>
<feature type="binding site" evidence="1">
    <location>
        <begin position="281"/>
        <end position="283"/>
    </location>
    <ligand>
        <name>4-CDP-2-C-methyl-D-erythritol 2-phosphate</name>
        <dbReference type="ChEBI" id="CHEBI:57919"/>
    </ligand>
</feature>
<feature type="binding site" evidence="1">
    <location>
        <begin position="357"/>
        <end position="360"/>
    </location>
    <ligand>
        <name>4-CDP-2-C-methyl-D-erythritol 2-phosphate</name>
        <dbReference type="ChEBI" id="CHEBI:57919"/>
    </ligand>
</feature>
<feature type="binding site" evidence="1">
    <location>
        <position position="364"/>
    </location>
    <ligand>
        <name>4-CDP-2-C-methyl-D-erythritol 2-phosphate</name>
        <dbReference type="ChEBI" id="CHEBI:57919"/>
    </ligand>
</feature>
<feature type="binding site" evidence="1">
    <location>
        <position position="367"/>
    </location>
    <ligand>
        <name>4-CDP-2-C-methyl-D-erythritol 2-phosphate</name>
        <dbReference type="ChEBI" id="CHEBI:57919"/>
    </ligand>
</feature>
<feature type="site" description="Transition state stabilizer" evidence="1">
    <location>
        <position position="15"/>
    </location>
</feature>
<feature type="site" description="Transition state stabilizer" evidence="1">
    <location>
        <position position="22"/>
    </location>
</feature>
<feature type="site" description="Positions MEP for the nucleophilic attack" evidence="1">
    <location>
        <position position="152"/>
    </location>
</feature>
<feature type="site" description="Positions MEP for the nucleophilic attack" evidence="1">
    <location>
        <position position="206"/>
    </location>
</feature>
<feature type="site" description="Transition state stabilizer" evidence="1">
    <location>
        <position position="259"/>
    </location>
</feature>
<feature type="site" description="Transition state stabilizer" evidence="1">
    <location>
        <position position="358"/>
    </location>
</feature>
<dbReference type="EC" id="2.7.7.60" evidence="1"/>
<dbReference type="EC" id="4.6.1.12" evidence="1"/>
<dbReference type="EMBL" id="CP000449">
    <property type="protein sequence ID" value="ABI65731.1"/>
    <property type="molecule type" value="Genomic_DNA"/>
</dbReference>
<dbReference type="RefSeq" id="WP_011643378.1">
    <property type="nucleotide sequence ID" value="NC_008347.1"/>
</dbReference>
<dbReference type="SMR" id="Q0APQ6"/>
<dbReference type="STRING" id="394221.Mmar10_1439"/>
<dbReference type="KEGG" id="mmr:Mmar10_1439"/>
<dbReference type="eggNOG" id="COG0245">
    <property type="taxonomic scope" value="Bacteria"/>
</dbReference>
<dbReference type="eggNOG" id="COG1211">
    <property type="taxonomic scope" value="Bacteria"/>
</dbReference>
<dbReference type="HOGENOM" id="CLU_042800_2_5_5"/>
<dbReference type="OrthoDB" id="9804336at2"/>
<dbReference type="UniPathway" id="UPA00056">
    <property type="reaction ID" value="UER00093"/>
</dbReference>
<dbReference type="UniPathway" id="UPA00056">
    <property type="reaction ID" value="UER00095"/>
</dbReference>
<dbReference type="Proteomes" id="UP000001964">
    <property type="component" value="Chromosome"/>
</dbReference>
<dbReference type="GO" id="GO:0008685">
    <property type="term" value="F:2-C-methyl-D-erythritol 2,4-cyclodiphosphate synthase activity"/>
    <property type="evidence" value="ECO:0007669"/>
    <property type="project" value="UniProtKB-UniRule"/>
</dbReference>
<dbReference type="GO" id="GO:0050518">
    <property type="term" value="F:2-C-methyl-D-erythritol 4-phosphate cytidylyltransferase activity"/>
    <property type="evidence" value="ECO:0007669"/>
    <property type="project" value="UniProtKB-UniRule"/>
</dbReference>
<dbReference type="GO" id="GO:0046872">
    <property type="term" value="F:metal ion binding"/>
    <property type="evidence" value="ECO:0007669"/>
    <property type="project" value="UniProtKB-KW"/>
</dbReference>
<dbReference type="GO" id="GO:0019288">
    <property type="term" value="P:isopentenyl diphosphate biosynthetic process, methylerythritol 4-phosphate pathway"/>
    <property type="evidence" value="ECO:0007669"/>
    <property type="project" value="UniProtKB-UniRule"/>
</dbReference>
<dbReference type="GO" id="GO:0016114">
    <property type="term" value="P:terpenoid biosynthetic process"/>
    <property type="evidence" value="ECO:0007669"/>
    <property type="project" value="InterPro"/>
</dbReference>
<dbReference type="CDD" id="cd02516">
    <property type="entry name" value="CDP-ME_synthetase"/>
    <property type="match status" value="1"/>
</dbReference>
<dbReference type="CDD" id="cd00554">
    <property type="entry name" value="MECDP_synthase"/>
    <property type="match status" value="1"/>
</dbReference>
<dbReference type="Gene3D" id="3.30.1330.50">
    <property type="entry name" value="2-C-methyl-D-erythritol 2,4-cyclodiphosphate synthase"/>
    <property type="match status" value="1"/>
</dbReference>
<dbReference type="Gene3D" id="3.90.550.10">
    <property type="entry name" value="Spore Coat Polysaccharide Biosynthesis Protein SpsA, Chain A"/>
    <property type="match status" value="1"/>
</dbReference>
<dbReference type="HAMAP" id="MF_00108">
    <property type="entry name" value="IspD"/>
    <property type="match status" value="1"/>
</dbReference>
<dbReference type="HAMAP" id="MF_01520">
    <property type="entry name" value="IspDF"/>
    <property type="match status" value="1"/>
</dbReference>
<dbReference type="HAMAP" id="MF_00107">
    <property type="entry name" value="IspF"/>
    <property type="match status" value="1"/>
</dbReference>
<dbReference type="InterPro" id="IPR001228">
    <property type="entry name" value="IspD"/>
</dbReference>
<dbReference type="InterPro" id="IPR026596">
    <property type="entry name" value="IspD/F"/>
</dbReference>
<dbReference type="InterPro" id="IPR034683">
    <property type="entry name" value="IspD/TarI"/>
</dbReference>
<dbReference type="InterPro" id="IPR018294">
    <property type="entry name" value="ISPD_synthase_CS"/>
</dbReference>
<dbReference type="InterPro" id="IPR003526">
    <property type="entry name" value="MECDP_synthase"/>
</dbReference>
<dbReference type="InterPro" id="IPR020555">
    <property type="entry name" value="MECDP_synthase_CS"/>
</dbReference>
<dbReference type="InterPro" id="IPR036571">
    <property type="entry name" value="MECDP_synthase_sf"/>
</dbReference>
<dbReference type="InterPro" id="IPR029044">
    <property type="entry name" value="Nucleotide-diphossugar_trans"/>
</dbReference>
<dbReference type="NCBIfam" id="TIGR00453">
    <property type="entry name" value="ispD"/>
    <property type="match status" value="1"/>
</dbReference>
<dbReference type="NCBIfam" id="TIGR00151">
    <property type="entry name" value="ispF"/>
    <property type="match status" value="1"/>
</dbReference>
<dbReference type="NCBIfam" id="NF006899">
    <property type="entry name" value="PRK09382.1"/>
    <property type="match status" value="1"/>
</dbReference>
<dbReference type="PANTHER" id="PTHR43181">
    <property type="entry name" value="2-C-METHYL-D-ERYTHRITOL 2,4-CYCLODIPHOSPHATE SYNTHASE, CHLOROPLASTIC"/>
    <property type="match status" value="1"/>
</dbReference>
<dbReference type="PANTHER" id="PTHR43181:SF1">
    <property type="entry name" value="2-C-METHYL-D-ERYTHRITOL 2,4-CYCLODIPHOSPHATE SYNTHASE, CHLOROPLASTIC"/>
    <property type="match status" value="1"/>
</dbReference>
<dbReference type="Pfam" id="PF01128">
    <property type="entry name" value="IspD"/>
    <property type="match status" value="1"/>
</dbReference>
<dbReference type="Pfam" id="PF02542">
    <property type="entry name" value="YgbB"/>
    <property type="match status" value="1"/>
</dbReference>
<dbReference type="SUPFAM" id="SSF69765">
    <property type="entry name" value="IpsF-like"/>
    <property type="match status" value="1"/>
</dbReference>
<dbReference type="SUPFAM" id="SSF53448">
    <property type="entry name" value="Nucleotide-diphospho-sugar transferases"/>
    <property type="match status" value="1"/>
</dbReference>
<dbReference type="PROSITE" id="PS01295">
    <property type="entry name" value="ISPD"/>
    <property type="match status" value="1"/>
</dbReference>
<dbReference type="PROSITE" id="PS01350">
    <property type="entry name" value="ISPF"/>
    <property type="match status" value="1"/>
</dbReference>
<organism>
    <name type="scientific">Maricaulis maris (strain MCS10)</name>
    <name type="common">Caulobacter maris</name>
    <dbReference type="NCBI Taxonomy" id="394221"/>
    <lineage>
        <taxon>Bacteria</taxon>
        <taxon>Pseudomonadati</taxon>
        <taxon>Pseudomonadota</taxon>
        <taxon>Alphaproteobacteria</taxon>
        <taxon>Maricaulales</taxon>
        <taxon>Maricaulaceae</taxon>
        <taxon>Maricaulis</taxon>
    </lineage>
</organism>